<organism>
    <name type="scientific">Chlorobium phaeovibrioides (strain DSM 265 / 1930)</name>
    <name type="common">Prosthecochloris vibrioformis (strain DSM 265)</name>
    <dbReference type="NCBI Taxonomy" id="290318"/>
    <lineage>
        <taxon>Bacteria</taxon>
        <taxon>Pseudomonadati</taxon>
        <taxon>Chlorobiota</taxon>
        <taxon>Chlorobiia</taxon>
        <taxon>Chlorobiales</taxon>
        <taxon>Chlorobiaceae</taxon>
        <taxon>Chlorobium/Pelodictyon group</taxon>
        <taxon>Chlorobium</taxon>
    </lineage>
</organism>
<accession>A4SDQ2</accession>
<gene>
    <name evidence="1" type="primary">trpA</name>
    <name type="ordered locus">Cvib_0589</name>
</gene>
<dbReference type="EC" id="4.2.1.20" evidence="1"/>
<dbReference type="EMBL" id="CP000607">
    <property type="protein sequence ID" value="ABP36611.1"/>
    <property type="molecule type" value="Genomic_DNA"/>
</dbReference>
<dbReference type="SMR" id="A4SDQ2"/>
<dbReference type="STRING" id="290318.Cvib_0589"/>
<dbReference type="KEGG" id="pvi:Cvib_0589"/>
<dbReference type="eggNOG" id="COG0159">
    <property type="taxonomic scope" value="Bacteria"/>
</dbReference>
<dbReference type="HOGENOM" id="CLU_016734_0_0_10"/>
<dbReference type="OrthoDB" id="9804578at2"/>
<dbReference type="UniPathway" id="UPA00035">
    <property type="reaction ID" value="UER00044"/>
</dbReference>
<dbReference type="GO" id="GO:0005829">
    <property type="term" value="C:cytosol"/>
    <property type="evidence" value="ECO:0007669"/>
    <property type="project" value="TreeGrafter"/>
</dbReference>
<dbReference type="GO" id="GO:0004834">
    <property type="term" value="F:tryptophan synthase activity"/>
    <property type="evidence" value="ECO:0007669"/>
    <property type="project" value="UniProtKB-UniRule"/>
</dbReference>
<dbReference type="CDD" id="cd04724">
    <property type="entry name" value="Tryptophan_synthase_alpha"/>
    <property type="match status" value="1"/>
</dbReference>
<dbReference type="Gene3D" id="3.20.20.70">
    <property type="entry name" value="Aldolase class I"/>
    <property type="match status" value="1"/>
</dbReference>
<dbReference type="HAMAP" id="MF_00131">
    <property type="entry name" value="Trp_synth_alpha"/>
    <property type="match status" value="1"/>
</dbReference>
<dbReference type="InterPro" id="IPR013785">
    <property type="entry name" value="Aldolase_TIM"/>
</dbReference>
<dbReference type="InterPro" id="IPR011060">
    <property type="entry name" value="RibuloseP-bd_barrel"/>
</dbReference>
<dbReference type="InterPro" id="IPR018204">
    <property type="entry name" value="Trp_synthase_alpha_AS"/>
</dbReference>
<dbReference type="InterPro" id="IPR002028">
    <property type="entry name" value="Trp_synthase_suA"/>
</dbReference>
<dbReference type="NCBIfam" id="TIGR00262">
    <property type="entry name" value="trpA"/>
    <property type="match status" value="1"/>
</dbReference>
<dbReference type="PANTHER" id="PTHR43406:SF1">
    <property type="entry name" value="TRYPTOPHAN SYNTHASE ALPHA CHAIN, CHLOROPLASTIC"/>
    <property type="match status" value="1"/>
</dbReference>
<dbReference type="PANTHER" id="PTHR43406">
    <property type="entry name" value="TRYPTOPHAN SYNTHASE, ALPHA CHAIN"/>
    <property type="match status" value="1"/>
</dbReference>
<dbReference type="Pfam" id="PF00290">
    <property type="entry name" value="Trp_syntA"/>
    <property type="match status" value="1"/>
</dbReference>
<dbReference type="SUPFAM" id="SSF51366">
    <property type="entry name" value="Ribulose-phoshate binding barrel"/>
    <property type="match status" value="1"/>
</dbReference>
<dbReference type="PROSITE" id="PS00167">
    <property type="entry name" value="TRP_SYNTHASE_ALPHA"/>
    <property type="match status" value="1"/>
</dbReference>
<protein>
    <recommendedName>
        <fullName evidence="1">Tryptophan synthase alpha chain</fullName>
        <ecNumber evidence="1">4.2.1.20</ecNumber>
    </recommendedName>
</protein>
<proteinExistence type="inferred from homology"/>
<comment type="function">
    <text evidence="1">The alpha subunit is responsible for the aldol cleavage of indoleglycerol phosphate to indole and glyceraldehyde 3-phosphate.</text>
</comment>
<comment type="catalytic activity">
    <reaction evidence="1">
        <text>(1S,2R)-1-C-(indol-3-yl)glycerol 3-phosphate + L-serine = D-glyceraldehyde 3-phosphate + L-tryptophan + H2O</text>
        <dbReference type="Rhea" id="RHEA:10532"/>
        <dbReference type="ChEBI" id="CHEBI:15377"/>
        <dbReference type="ChEBI" id="CHEBI:33384"/>
        <dbReference type="ChEBI" id="CHEBI:57912"/>
        <dbReference type="ChEBI" id="CHEBI:58866"/>
        <dbReference type="ChEBI" id="CHEBI:59776"/>
        <dbReference type="EC" id="4.2.1.20"/>
    </reaction>
</comment>
<comment type="pathway">
    <text evidence="1">Amino-acid biosynthesis; L-tryptophan biosynthesis; L-tryptophan from chorismate: step 5/5.</text>
</comment>
<comment type="subunit">
    <text evidence="1">Tetramer of two alpha and two beta chains.</text>
</comment>
<comment type="similarity">
    <text evidence="1">Belongs to the TrpA family.</text>
</comment>
<feature type="chain" id="PRO_1000076362" description="Tryptophan synthase alpha chain">
    <location>
        <begin position="1"/>
        <end position="267"/>
    </location>
</feature>
<feature type="active site" description="Proton acceptor" evidence="1">
    <location>
        <position position="47"/>
    </location>
</feature>
<feature type="active site" description="Proton acceptor" evidence="1">
    <location>
        <position position="58"/>
    </location>
</feature>
<evidence type="ECO:0000255" key="1">
    <source>
        <dbReference type="HAMAP-Rule" id="MF_00131"/>
    </source>
</evidence>
<name>TRPA_CHLPM</name>
<reference key="1">
    <citation type="submission" date="2007-03" db="EMBL/GenBank/DDBJ databases">
        <title>Complete sequence of Prosthecochloris vibrioformis DSM 265.</title>
        <authorList>
            <consortium name="US DOE Joint Genome Institute"/>
            <person name="Copeland A."/>
            <person name="Lucas S."/>
            <person name="Lapidus A."/>
            <person name="Barry K."/>
            <person name="Detter J.C."/>
            <person name="Glavina del Rio T."/>
            <person name="Hammon N."/>
            <person name="Israni S."/>
            <person name="Pitluck S."/>
            <person name="Schmutz J."/>
            <person name="Larimer F."/>
            <person name="Land M."/>
            <person name="Hauser L."/>
            <person name="Mikhailova N."/>
            <person name="Li T."/>
            <person name="Overmann J."/>
            <person name="Schuster S.C."/>
            <person name="Bryant D.A."/>
            <person name="Richardson P."/>
        </authorList>
    </citation>
    <scope>NUCLEOTIDE SEQUENCE [LARGE SCALE GENOMIC DNA]</scope>
    <source>
        <strain>DSM 265 / 1930</strain>
    </source>
</reference>
<sequence length="267" mass="29136">MTENRITALLRQDKKLLLAYYMPEFPVAGATLPVLEALQESGADIIELGIPFSDPVGDGPVIQEAAHRSIANGVSLHRLLDIVGRARRGEGCRKITVPILLMGYCNPLIAYGGDCFLTDATEAGIDGLLLPDLPPEEAGEFLERAKAFSMTVVFLISPVTPPERIEMIDGMSTDFSYCLAVNATTGTAKLSEGDTEASVDEYLKRVRRHTKKKFVVGFGIKDRERVEHMWRFADGAVVGTALLQNIASAGTPQEAARLAGEFWRTLR</sequence>
<keyword id="KW-0028">Amino-acid biosynthesis</keyword>
<keyword id="KW-0057">Aromatic amino acid biosynthesis</keyword>
<keyword id="KW-0456">Lyase</keyword>
<keyword id="KW-0822">Tryptophan biosynthesis</keyword>